<comment type="function">
    <text evidence="1">Required for maturation of 30S ribosomal subunits.</text>
</comment>
<comment type="subcellular location">
    <subcellularLocation>
        <location evidence="1">Cytoplasm</location>
    </subcellularLocation>
</comment>
<comment type="similarity">
    <text evidence="1">Belongs to the RimP family.</text>
</comment>
<gene>
    <name evidence="1" type="primary">rimP</name>
    <name type="ordered locus">NMA1895</name>
</gene>
<organism>
    <name type="scientific">Neisseria meningitidis serogroup A / serotype 4A (strain DSM 15465 / Z2491)</name>
    <dbReference type="NCBI Taxonomy" id="122587"/>
    <lineage>
        <taxon>Bacteria</taxon>
        <taxon>Pseudomonadati</taxon>
        <taxon>Pseudomonadota</taxon>
        <taxon>Betaproteobacteria</taxon>
        <taxon>Neisseriales</taxon>
        <taxon>Neisseriaceae</taxon>
        <taxon>Neisseria</taxon>
    </lineage>
</organism>
<keyword id="KW-0963">Cytoplasm</keyword>
<keyword id="KW-0690">Ribosome biogenesis</keyword>
<feature type="chain" id="PRO_0000181894" description="Ribosome maturation factor RimP">
    <location>
        <begin position="1"/>
        <end position="149"/>
    </location>
</feature>
<sequence length="149" mass="16636">MYIGSSMDIQTILEKTLPGLGYELVDFELTAQGTLRVFIDKESGITVEDCATVSNHLSRVFMVEDIDYKNLEISSPGLDRPLKKAADFVRFAGQNAKIKTRLPIDGQKNFIGKIEGCENDTVTVSFDGKTVQIELGNIDKARLRPEFKF</sequence>
<name>RIMP_NEIMA</name>
<reference key="1">
    <citation type="journal article" date="2000" name="Nature">
        <title>Complete DNA sequence of a serogroup A strain of Neisseria meningitidis Z2491.</title>
        <authorList>
            <person name="Parkhill J."/>
            <person name="Achtman M."/>
            <person name="James K.D."/>
            <person name="Bentley S.D."/>
            <person name="Churcher C.M."/>
            <person name="Klee S.R."/>
            <person name="Morelli G."/>
            <person name="Basham D."/>
            <person name="Brown D."/>
            <person name="Chillingworth T."/>
            <person name="Davies R.M."/>
            <person name="Davis P."/>
            <person name="Devlin K."/>
            <person name="Feltwell T."/>
            <person name="Hamlin N."/>
            <person name="Holroyd S."/>
            <person name="Jagels K."/>
            <person name="Leather S."/>
            <person name="Moule S."/>
            <person name="Mungall K.L."/>
            <person name="Quail M.A."/>
            <person name="Rajandream M.A."/>
            <person name="Rutherford K.M."/>
            <person name="Simmonds M."/>
            <person name="Skelton J."/>
            <person name="Whitehead S."/>
            <person name="Spratt B.G."/>
            <person name="Barrell B.G."/>
        </authorList>
    </citation>
    <scope>NUCLEOTIDE SEQUENCE [LARGE SCALE GENOMIC DNA]</scope>
    <source>
        <strain>DSM 15465 / Z2491</strain>
    </source>
</reference>
<proteinExistence type="inferred from homology"/>
<protein>
    <recommendedName>
        <fullName evidence="1">Ribosome maturation factor RimP</fullName>
    </recommendedName>
</protein>
<dbReference type="EMBL" id="AL157959">
    <property type="protein sequence ID" value="CAM09012.1"/>
    <property type="molecule type" value="Genomic_DNA"/>
</dbReference>
<dbReference type="SMR" id="P67216"/>
<dbReference type="EnsemblBacteria" id="CAM09012">
    <property type="protein sequence ID" value="CAM09012"/>
    <property type="gene ID" value="NMA1895"/>
</dbReference>
<dbReference type="KEGG" id="nma:NMA1895"/>
<dbReference type="HOGENOM" id="CLU_070525_1_0_4"/>
<dbReference type="Proteomes" id="UP000000626">
    <property type="component" value="Chromosome"/>
</dbReference>
<dbReference type="GO" id="GO:0005829">
    <property type="term" value="C:cytosol"/>
    <property type="evidence" value="ECO:0007669"/>
    <property type="project" value="TreeGrafter"/>
</dbReference>
<dbReference type="GO" id="GO:0000028">
    <property type="term" value="P:ribosomal small subunit assembly"/>
    <property type="evidence" value="ECO:0007669"/>
    <property type="project" value="TreeGrafter"/>
</dbReference>
<dbReference type="GO" id="GO:0006412">
    <property type="term" value="P:translation"/>
    <property type="evidence" value="ECO:0007669"/>
    <property type="project" value="TreeGrafter"/>
</dbReference>
<dbReference type="CDD" id="cd01734">
    <property type="entry name" value="YlxS_C"/>
    <property type="match status" value="1"/>
</dbReference>
<dbReference type="FunFam" id="2.30.30.180:FF:000005">
    <property type="entry name" value="Ribosome maturation factor RimP"/>
    <property type="match status" value="1"/>
</dbReference>
<dbReference type="FunFam" id="3.30.300.70:FF:000008">
    <property type="entry name" value="Ribosome maturation factor RimP"/>
    <property type="match status" value="1"/>
</dbReference>
<dbReference type="Gene3D" id="2.30.30.180">
    <property type="entry name" value="Ribosome maturation factor RimP, C-terminal domain"/>
    <property type="match status" value="1"/>
</dbReference>
<dbReference type="Gene3D" id="3.30.300.70">
    <property type="entry name" value="RimP-like superfamily, N-terminal"/>
    <property type="match status" value="1"/>
</dbReference>
<dbReference type="HAMAP" id="MF_01077">
    <property type="entry name" value="RimP"/>
    <property type="match status" value="1"/>
</dbReference>
<dbReference type="InterPro" id="IPR003728">
    <property type="entry name" value="Ribosome_maturation_RimP"/>
</dbReference>
<dbReference type="InterPro" id="IPR028998">
    <property type="entry name" value="RimP_C"/>
</dbReference>
<dbReference type="InterPro" id="IPR036847">
    <property type="entry name" value="RimP_C_sf"/>
</dbReference>
<dbReference type="InterPro" id="IPR028989">
    <property type="entry name" value="RimP_N"/>
</dbReference>
<dbReference type="InterPro" id="IPR035956">
    <property type="entry name" value="RimP_N_sf"/>
</dbReference>
<dbReference type="NCBIfam" id="NF000929">
    <property type="entry name" value="PRK00092.2-1"/>
    <property type="match status" value="1"/>
</dbReference>
<dbReference type="PANTHER" id="PTHR33867">
    <property type="entry name" value="RIBOSOME MATURATION FACTOR RIMP"/>
    <property type="match status" value="1"/>
</dbReference>
<dbReference type="PANTHER" id="PTHR33867:SF1">
    <property type="entry name" value="RIBOSOME MATURATION FACTOR RIMP"/>
    <property type="match status" value="1"/>
</dbReference>
<dbReference type="Pfam" id="PF17384">
    <property type="entry name" value="DUF150_C"/>
    <property type="match status" value="1"/>
</dbReference>
<dbReference type="Pfam" id="PF02576">
    <property type="entry name" value="RimP_N"/>
    <property type="match status" value="1"/>
</dbReference>
<dbReference type="SUPFAM" id="SSF74942">
    <property type="entry name" value="YhbC-like, C-terminal domain"/>
    <property type="match status" value="1"/>
</dbReference>
<dbReference type="SUPFAM" id="SSF75420">
    <property type="entry name" value="YhbC-like, N-terminal domain"/>
    <property type="match status" value="1"/>
</dbReference>
<accession>P67216</accession>
<accession>A1IT99</accession>
<accession>Q9JR05</accession>
<evidence type="ECO:0000255" key="1">
    <source>
        <dbReference type="HAMAP-Rule" id="MF_01077"/>
    </source>
</evidence>